<protein>
    <recommendedName>
        <fullName evidence="1">NAD(P)H-quinone oxidoreductase subunit 3, chloroplastic</fullName>
        <ecNumber evidence="1">7.1.1.-</ecNumber>
    </recommendedName>
    <alternativeName>
        <fullName evidence="1">NAD(P)H dehydrogenase subunit 3</fullName>
    </alternativeName>
    <alternativeName>
        <fullName evidence="1">NADH-plastoquinone oxidoreductase subunit 3</fullName>
    </alternativeName>
</protein>
<sequence>MFLLHEYDIFWAFLIISSVIPILAFLISGVLAPISKGPEKLSSYESGIEPMGDAWLQFRIRYYMFALVFVVFDVETVFLYPWAMSFDVLGVSVFIEALIFVLILIVGSVYAWRKGALEWS</sequence>
<feature type="chain" id="PRO_0000362812" description="NAD(P)H-quinone oxidoreductase subunit 3, chloroplastic">
    <location>
        <begin position="1"/>
        <end position="120"/>
    </location>
</feature>
<feature type="transmembrane region" description="Helical" evidence="1">
    <location>
        <begin position="9"/>
        <end position="29"/>
    </location>
</feature>
<feature type="transmembrane region" description="Helical" evidence="1">
    <location>
        <begin position="64"/>
        <end position="84"/>
    </location>
</feature>
<feature type="transmembrane region" description="Helical" evidence="1">
    <location>
        <begin position="88"/>
        <end position="108"/>
    </location>
</feature>
<organism>
    <name type="scientific">Buxus microphylla</name>
    <name type="common">Littleleaf boxwood</name>
    <name type="synonym">Japanese boxwood</name>
    <dbReference type="NCBI Taxonomy" id="153571"/>
    <lineage>
        <taxon>Eukaryota</taxon>
        <taxon>Viridiplantae</taxon>
        <taxon>Streptophyta</taxon>
        <taxon>Embryophyta</taxon>
        <taxon>Tracheophyta</taxon>
        <taxon>Spermatophyta</taxon>
        <taxon>Magnoliopsida</taxon>
        <taxon>Buxales</taxon>
        <taxon>Buxaceae</taxon>
        <taxon>Buxus</taxon>
    </lineage>
</organism>
<geneLocation type="chloroplast"/>
<accession>A6MM41</accession>
<dbReference type="EC" id="7.1.1.-" evidence="1"/>
<dbReference type="EMBL" id="EF380351">
    <property type="protein sequence ID" value="ABQ45254.1"/>
    <property type="molecule type" value="Genomic_DNA"/>
</dbReference>
<dbReference type="RefSeq" id="YP_001294189.1">
    <property type="nucleotide sequence ID" value="NC_009599.1"/>
</dbReference>
<dbReference type="SMR" id="A6MM41"/>
<dbReference type="GeneID" id="5236894"/>
<dbReference type="GO" id="GO:0009535">
    <property type="term" value="C:chloroplast thylakoid membrane"/>
    <property type="evidence" value="ECO:0007669"/>
    <property type="project" value="UniProtKB-SubCell"/>
</dbReference>
<dbReference type="GO" id="GO:0030964">
    <property type="term" value="C:NADH dehydrogenase complex"/>
    <property type="evidence" value="ECO:0007669"/>
    <property type="project" value="TreeGrafter"/>
</dbReference>
<dbReference type="GO" id="GO:0008137">
    <property type="term" value="F:NADH dehydrogenase (ubiquinone) activity"/>
    <property type="evidence" value="ECO:0007669"/>
    <property type="project" value="InterPro"/>
</dbReference>
<dbReference type="GO" id="GO:0048038">
    <property type="term" value="F:quinone binding"/>
    <property type="evidence" value="ECO:0007669"/>
    <property type="project" value="UniProtKB-KW"/>
</dbReference>
<dbReference type="GO" id="GO:0019684">
    <property type="term" value="P:photosynthesis, light reaction"/>
    <property type="evidence" value="ECO:0007669"/>
    <property type="project" value="UniProtKB-UniRule"/>
</dbReference>
<dbReference type="FunFam" id="1.20.58.1610:FF:000001">
    <property type="entry name" value="NAD(P)H-quinone oxidoreductase subunit 3, chloroplastic"/>
    <property type="match status" value="1"/>
</dbReference>
<dbReference type="Gene3D" id="1.20.58.1610">
    <property type="entry name" value="NADH:ubiquinone/plastoquinone oxidoreductase, chain 3"/>
    <property type="match status" value="1"/>
</dbReference>
<dbReference type="HAMAP" id="MF_01394">
    <property type="entry name" value="NDH1_NuoA"/>
    <property type="match status" value="1"/>
</dbReference>
<dbReference type="InterPro" id="IPR023043">
    <property type="entry name" value="NAD(P)H_OxRDtase_bac/plastid"/>
</dbReference>
<dbReference type="InterPro" id="IPR000440">
    <property type="entry name" value="NADH_UbQ/plastoQ_OxRdtase_su3"/>
</dbReference>
<dbReference type="InterPro" id="IPR038430">
    <property type="entry name" value="NDAH_ubi_oxred_su3_sf"/>
</dbReference>
<dbReference type="PANTHER" id="PTHR11058">
    <property type="entry name" value="NADH-UBIQUINONE OXIDOREDUCTASE CHAIN 3"/>
    <property type="match status" value="1"/>
</dbReference>
<dbReference type="PANTHER" id="PTHR11058:SF9">
    <property type="entry name" value="NADH-UBIQUINONE OXIDOREDUCTASE CHAIN 3"/>
    <property type="match status" value="1"/>
</dbReference>
<dbReference type="Pfam" id="PF00507">
    <property type="entry name" value="Oxidored_q4"/>
    <property type="match status" value="1"/>
</dbReference>
<gene>
    <name evidence="1" type="primary">ndhC</name>
</gene>
<evidence type="ECO:0000255" key="1">
    <source>
        <dbReference type="HAMAP-Rule" id="MF_01394"/>
    </source>
</evidence>
<name>NU3C_BUXMI</name>
<keyword id="KW-0150">Chloroplast</keyword>
<keyword id="KW-0472">Membrane</keyword>
<keyword id="KW-0520">NAD</keyword>
<keyword id="KW-0521">NADP</keyword>
<keyword id="KW-0934">Plastid</keyword>
<keyword id="KW-0618">Plastoquinone</keyword>
<keyword id="KW-0874">Quinone</keyword>
<keyword id="KW-0793">Thylakoid</keyword>
<keyword id="KW-1278">Translocase</keyword>
<keyword id="KW-0812">Transmembrane</keyword>
<keyword id="KW-1133">Transmembrane helix</keyword>
<keyword id="KW-0813">Transport</keyword>
<proteinExistence type="inferred from homology"/>
<reference key="1">
    <citation type="journal article" date="2007" name="Mol. Phylogenet. Evol.">
        <title>Phylogenetic and evolutionary implications of complete chloroplast genome sequences of four early-diverging angiosperms: Buxus (Buxaceae), Chloranthus (Chloranthaceae), Dioscorea (Dioscoreaceae), and Illicium (Schisandraceae).</title>
        <authorList>
            <person name="Hansen D.R."/>
            <person name="Dastidar S.G."/>
            <person name="Cai Z."/>
            <person name="Penaflor C."/>
            <person name="Kuehl J.V."/>
            <person name="Boore J.L."/>
            <person name="Jansen R.K."/>
        </authorList>
    </citation>
    <scope>NUCLEOTIDE SEQUENCE [LARGE SCALE GENOMIC DNA]</scope>
</reference>
<comment type="function">
    <text evidence="1">NDH shuttles electrons from NAD(P)H:plastoquinone, via FMN and iron-sulfur (Fe-S) centers, to quinones in the photosynthetic chain and possibly in a chloroplast respiratory chain. The immediate electron acceptor for the enzyme in this species is believed to be plastoquinone. Couples the redox reaction to proton translocation, and thus conserves the redox energy in a proton gradient.</text>
</comment>
<comment type="catalytic activity">
    <reaction evidence="1">
        <text>a plastoquinone + NADH + (n+1) H(+)(in) = a plastoquinol + NAD(+) + n H(+)(out)</text>
        <dbReference type="Rhea" id="RHEA:42608"/>
        <dbReference type="Rhea" id="RHEA-COMP:9561"/>
        <dbReference type="Rhea" id="RHEA-COMP:9562"/>
        <dbReference type="ChEBI" id="CHEBI:15378"/>
        <dbReference type="ChEBI" id="CHEBI:17757"/>
        <dbReference type="ChEBI" id="CHEBI:57540"/>
        <dbReference type="ChEBI" id="CHEBI:57945"/>
        <dbReference type="ChEBI" id="CHEBI:62192"/>
    </reaction>
</comment>
<comment type="catalytic activity">
    <reaction evidence="1">
        <text>a plastoquinone + NADPH + (n+1) H(+)(in) = a plastoquinol + NADP(+) + n H(+)(out)</text>
        <dbReference type="Rhea" id="RHEA:42612"/>
        <dbReference type="Rhea" id="RHEA-COMP:9561"/>
        <dbReference type="Rhea" id="RHEA-COMP:9562"/>
        <dbReference type="ChEBI" id="CHEBI:15378"/>
        <dbReference type="ChEBI" id="CHEBI:17757"/>
        <dbReference type="ChEBI" id="CHEBI:57783"/>
        <dbReference type="ChEBI" id="CHEBI:58349"/>
        <dbReference type="ChEBI" id="CHEBI:62192"/>
    </reaction>
</comment>
<comment type="subunit">
    <text evidence="1">NDH is composed of at least 16 different subunits, 5 of which are encoded in the nucleus.</text>
</comment>
<comment type="subcellular location">
    <subcellularLocation>
        <location evidence="1">Plastid</location>
        <location evidence="1">Chloroplast thylakoid membrane</location>
        <topology evidence="1">Multi-pass membrane protein</topology>
    </subcellularLocation>
</comment>
<comment type="similarity">
    <text evidence="1">Belongs to the complex I subunit 3 family.</text>
</comment>